<proteinExistence type="evidence at protein level"/>
<evidence type="ECO:0000255" key="1">
    <source>
        <dbReference type="PROSITE-ProRule" id="PRU00238"/>
    </source>
</evidence>
<organism>
    <name type="scientific">Glycera dibranchiata</name>
    <name type="common">Bloodworm</name>
    <dbReference type="NCBI Taxonomy" id="6350"/>
    <lineage>
        <taxon>Eukaryota</taxon>
        <taxon>Metazoa</taxon>
        <taxon>Spiralia</taxon>
        <taxon>Lophotrochozoa</taxon>
        <taxon>Annelida</taxon>
        <taxon>Polychaeta</taxon>
        <taxon>Errantia</taxon>
        <taxon>Phyllodocida</taxon>
        <taxon>Glyceridae</taxon>
        <taxon>Glycera</taxon>
    </lineage>
</organism>
<reference key="1">
    <citation type="journal article" date="1990" name="J. Biol. Chem.">
        <title>The cDNA sequences encoding two components of the polymeric fraction of the intracellular hemoglobin of Glycera dibranchiata.</title>
        <authorList>
            <person name="Zafar R.S."/>
            <person name="Chow L.H."/>
            <person name="Stern M.S."/>
            <person name="Scully J.S."/>
            <person name="Sharma P.R."/>
            <person name="Vinogradov S.N."/>
            <person name="Walz D.A."/>
        </authorList>
    </citation>
    <scope>NUCLEOTIDE SEQUENCE [MRNA]</scope>
    <scope>PARTIAL PROTEIN SEQUENCE</scope>
</reference>
<comment type="subunit">
    <text>Polymer.</text>
</comment>
<comment type="miscellaneous">
    <text>This protein is one of at least six components in the polymeric fraction of Glycera hemoglobin.</text>
</comment>
<comment type="similarity">
    <text evidence="1">Belongs to the globin family.</text>
</comment>
<name>GLBP3_GLYDI</name>
<accession>P21660</accession>
<sequence length="147" mass="15977">MHLTADQVAALKASWPEVSAGDGGAQLGLEMFTRYFDENPQMMFVFGYSGRTSALKHNSKLQNHGKIIVHQIGQAVSELDDGSKFEATLHKLGQEHKGFGDIKGEYFPALGDALLEAMNSKVHGLDRTLWAAGYRVISDALIAGLES</sequence>
<protein>
    <recommendedName>
        <fullName>Globin, polymeric component P3</fullName>
    </recommendedName>
</protein>
<dbReference type="EMBL" id="M55444">
    <property type="protein sequence ID" value="AAA29161.1"/>
    <property type="molecule type" value="mRNA"/>
</dbReference>
<dbReference type="PIR" id="B36529">
    <property type="entry name" value="B36529"/>
</dbReference>
<dbReference type="SMR" id="P21660"/>
<dbReference type="GO" id="GO:0020037">
    <property type="term" value="F:heme binding"/>
    <property type="evidence" value="ECO:0007669"/>
    <property type="project" value="InterPro"/>
</dbReference>
<dbReference type="GO" id="GO:0046872">
    <property type="term" value="F:metal ion binding"/>
    <property type="evidence" value="ECO:0007669"/>
    <property type="project" value="UniProtKB-KW"/>
</dbReference>
<dbReference type="GO" id="GO:0019825">
    <property type="term" value="F:oxygen binding"/>
    <property type="evidence" value="ECO:0007669"/>
    <property type="project" value="InterPro"/>
</dbReference>
<dbReference type="GO" id="GO:0005344">
    <property type="term" value="F:oxygen carrier activity"/>
    <property type="evidence" value="ECO:0007669"/>
    <property type="project" value="UniProtKB-KW"/>
</dbReference>
<dbReference type="CDD" id="cd01040">
    <property type="entry name" value="Mb-like"/>
    <property type="match status" value="1"/>
</dbReference>
<dbReference type="Gene3D" id="1.10.490.10">
    <property type="entry name" value="Globins"/>
    <property type="match status" value="1"/>
</dbReference>
<dbReference type="InterPro" id="IPR000971">
    <property type="entry name" value="Globin"/>
</dbReference>
<dbReference type="InterPro" id="IPR050532">
    <property type="entry name" value="Globin-like_OT"/>
</dbReference>
<dbReference type="InterPro" id="IPR009050">
    <property type="entry name" value="Globin-like_sf"/>
</dbReference>
<dbReference type="InterPro" id="IPR012292">
    <property type="entry name" value="Globin/Proto"/>
</dbReference>
<dbReference type="InterPro" id="IPR044399">
    <property type="entry name" value="Mb-like_M"/>
</dbReference>
<dbReference type="PANTHER" id="PTHR46458">
    <property type="entry name" value="BLR2807 PROTEIN"/>
    <property type="match status" value="1"/>
</dbReference>
<dbReference type="PANTHER" id="PTHR46458:SF1">
    <property type="entry name" value="GEO09476P1"/>
    <property type="match status" value="1"/>
</dbReference>
<dbReference type="Pfam" id="PF00042">
    <property type="entry name" value="Globin"/>
    <property type="match status" value="1"/>
</dbReference>
<dbReference type="PRINTS" id="PR01907">
    <property type="entry name" value="WORMGLOBIN"/>
</dbReference>
<dbReference type="SUPFAM" id="SSF46458">
    <property type="entry name" value="Globin-like"/>
    <property type="match status" value="1"/>
</dbReference>
<dbReference type="PROSITE" id="PS01033">
    <property type="entry name" value="GLOBIN"/>
    <property type="match status" value="1"/>
</dbReference>
<feature type="chain" id="PRO_0000052505" description="Globin, polymeric component P3">
    <location>
        <begin position="1"/>
        <end position="147"/>
    </location>
</feature>
<feature type="domain" description="Globin" evidence="1">
    <location>
        <begin position="2"/>
        <end position="146"/>
    </location>
</feature>
<feature type="binding site" description="proximal binding residue" evidence="1">
    <location>
        <position position="96"/>
    </location>
    <ligand>
        <name>heme b</name>
        <dbReference type="ChEBI" id="CHEBI:60344"/>
    </ligand>
    <ligandPart>
        <name>Fe</name>
        <dbReference type="ChEBI" id="CHEBI:18248"/>
    </ligandPart>
</feature>
<keyword id="KW-0903">Direct protein sequencing</keyword>
<keyword id="KW-0349">Heme</keyword>
<keyword id="KW-0408">Iron</keyword>
<keyword id="KW-0479">Metal-binding</keyword>
<keyword id="KW-0561">Oxygen transport</keyword>
<keyword id="KW-0813">Transport</keyword>